<organismHost>
    <name type="scientific">Escherichia coli</name>
    <dbReference type="NCBI Taxonomy" id="562"/>
</organismHost>
<protein>
    <recommendedName>
        <fullName>Uncharacterized 7.2 kDa protein in tk-vs intergenic region</fullName>
    </recommendedName>
</protein>
<accession>P13306</accession>
<name>Y06A_BPT4</name>
<reference key="1">
    <citation type="journal article" date="1986" name="Nucleic Acids Res.">
        <title>Nucleotide sequence and analysis of the 58.3 to 65.5-kb early region of bacteriophage T4.</title>
        <authorList>
            <person name="Valerie K."/>
            <person name="Stevens J."/>
            <person name="Lynch M."/>
            <person name="Henderson E.E."/>
            <person name="de Riel J.K."/>
        </authorList>
    </citation>
    <scope>NUCLEOTIDE SEQUENCE [GENOMIC DNA]</scope>
</reference>
<reference key="2">
    <citation type="journal article" date="2003" name="Microbiol. Mol. Biol. Rev.">
        <title>Bacteriophage T4 genome.</title>
        <authorList>
            <person name="Miller E.S."/>
            <person name="Kutter E."/>
            <person name="Mosig G."/>
            <person name="Arisaka F."/>
            <person name="Kunisawa T."/>
            <person name="Ruger W."/>
        </authorList>
    </citation>
    <scope>NUCLEOTIDE SEQUENCE [LARGE SCALE GENOMIC DNA]</scope>
</reference>
<sequence length="62" mass="7238">MITREQKNEILFLVGEIISLEKDLSFEISSEYGDAETYYELVKSIDKAENDLETYLENLTKD</sequence>
<dbReference type="EMBL" id="X04567">
    <property type="protein sequence ID" value="CAA28233.1"/>
    <property type="molecule type" value="Genomic_DNA"/>
</dbReference>
<dbReference type="EMBL" id="AF158101">
    <property type="protein sequence ID" value="AAD42664.1"/>
    <property type="molecule type" value="Genomic_DNA"/>
</dbReference>
<dbReference type="RefSeq" id="NP_049720.1">
    <property type="nucleotide sequence ID" value="NC_000866.4"/>
</dbReference>
<dbReference type="SMR" id="P13306"/>
<dbReference type="GeneID" id="1258719"/>
<dbReference type="KEGG" id="vg:1258719"/>
<dbReference type="OrthoDB" id="27894at10239"/>
<dbReference type="Proteomes" id="UP000009087">
    <property type="component" value="Segment"/>
</dbReference>
<proteinExistence type="predicted"/>
<feature type="chain" id="PRO_0000165133" description="Uncharacterized 7.2 kDa protein in tk-vs intergenic region">
    <location>
        <begin position="1"/>
        <end position="62"/>
    </location>
</feature>
<gene>
    <name type="primary">y06A</name>
    <name type="synonym">59.7</name>
    <name type="synonym">tk.1</name>
</gene>
<organism>
    <name type="scientific">Enterobacteria phage T4</name>
    <name type="common">Bacteriophage T4</name>
    <dbReference type="NCBI Taxonomy" id="10665"/>
    <lineage>
        <taxon>Viruses</taxon>
        <taxon>Duplodnaviria</taxon>
        <taxon>Heunggongvirae</taxon>
        <taxon>Uroviricota</taxon>
        <taxon>Caudoviricetes</taxon>
        <taxon>Straboviridae</taxon>
        <taxon>Tevenvirinae</taxon>
        <taxon>Tequatrovirus</taxon>
    </lineage>
</organism>
<keyword id="KW-1185">Reference proteome</keyword>